<accession>A4QKB2</accession>
<sequence length="498" mass="53976">MRINLTTSDPEVSIREKKNLGRIAQIIGPVLDVAFPPGKMPNIYNALVVKGRDTLGQEINVTCEVQQLLGNNRVRAVAMSATEGLKRGMDVVDMGNPLSVPVGGATLGRIFNVLGEPVDNLGPVDTRTTSPIHKSAPAFIQLDTKLSIFETGIKVVDLLAPYRRGGKIGLFGGAGVGKTVLIMELINNIAKAHGGVSVFGGVGERTREGNDLYMEMKESGVINEQNLAESKVALVYGQMNEPPGARMRVGLTALTMAEYFRDVNEQDVLLFIDNIFRFVQAGSEVSALLGRMPSAVGYQPTLSTEMGTLQERITSTKKGSITSIQAVYVPADDLTDPAPATTFAHLDATTVLSRGLAAKGIYPAVDPLDSTSTMLQPRIVGEEHYETAQQVKQTLQRYKELQDIIAILGLDELSEEDRLTVARARKIERFLSQPFFVAEVFTGSPGKYVGLAETIRGFKLILSGEFDSLPEQAFYLVGNIDEATAKATNLEMESKLKK</sequence>
<name>ATPB_BARVE</name>
<feature type="chain" id="PRO_0000339607" description="ATP synthase subunit beta, chloroplastic">
    <location>
        <begin position="1"/>
        <end position="498"/>
    </location>
</feature>
<feature type="binding site" evidence="2">
    <location>
        <begin position="172"/>
        <end position="179"/>
    </location>
    <ligand>
        <name>ATP</name>
        <dbReference type="ChEBI" id="CHEBI:30616"/>
    </ligand>
</feature>
<feature type="modified residue" description="Phosphothreonine" evidence="1">
    <location>
        <position position="6"/>
    </location>
</feature>
<feature type="modified residue" description="Phosphoserine" evidence="1">
    <location>
        <position position="13"/>
    </location>
</feature>
<protein>
    <recommendedName>
        <fullName evidence="2">ATP synthase subunit beta, chloroplastic</fullName>
        <ecNumber evidence="2">7.1.2.2</ecNumber>
    </recommendedName>
    <alternativeName>
        <fullName evidence="2">ATP synthase F1 sector subunit beta</fullName>
    </alternativeName>
    <alternativeName>
        <fullName evidence="2">F-ATPase subunit beta</fullName>
    </alternativeName>
</protein>
<comment type="function">
    <text evidence="2">Produces ATP from ADP in the presence of a proton gradient across the membrane. The catalytic sites are hosted primarily by the beta subunits.</text>
</comment>
<comment type="catalytic activity">
    <reaction evidence="2">
        <text>ATP + H2O + 4 H(+)(in) = ADP + phosphate + 5 H(+)(out)</text>
        <dbReference type="Rhea" id="RHEA:57720"/>
        <dbReference type="ChEBI" id="CHEBI:15377"/>
        <dbReference type="ChEBI" id="CHEBI:15378"/>
        <dbReference type="ChEBI" id="CHEBI:30616"/>
        <dbReference type="ChEBI" id="CHEBI:43474"/>
        <dbReference type="ChEBI" id="CHEBI:456216"/>
        <dbReference type="EC" id="7.1.2.2"/>
    </reaction>
</comment>
<comment type="subunit">
    <text evidence="2">F-type ATPases have 2 components, CF(1) - the catalytic core - and CF(0) - the membrane proton channel. CF(1) has five subunits: alpha(3), beta(3), gamma(1), delta(1), epsilon(1). CF(0) has four main subunits: a(1), b(1), b'(1) and c(9-12).</text>
</comment>
<comment type="subcellular location">
    <subcellularLocation>
        <location evidence="2">Plastid</location>
        <location evidence="2">Chloroplast thylakoid membrane</location>
        <topology evidence="2">Peripheral membrane protein</topology>
    </subcellularLocation>
</comment>
<comment type="similarity">
    <text evidence="2">Belongs to the ATPase alpha/beta chains family.</text>
</comment>
<evidence type="ECO:0000250" key="1">
    <source>
        <dbReference type="UniProtKB" id="P19366"/>
    </source>
</evidence>
<evidence type="ECO:0000255" key="2">
    <source>
        <dbReference type="HAMAP-Rule" id="MF_01347"/>
    </source>
</evidence>
<keyword id="KW-0066">ATP synthesis</keyword>
<keyword id="KW-0067">ATP-binding</keyword>
<keyword id="KW-0139">CF(1)</keyword>
<keyword id="KW-0150">Chloroplast</keyword>
<keyword id="KW-0375">Hydrogen ion transport</keyword>
<keyword id="KW-0406">Ion transport</keyword>
<keyword id="KW-0472">Membrane</keyword>
<keyword id="KW-0547">Nucleotide-binding</keyword>
<keyword id="KW-0597">Phosphoprotein</keyword>
<keyword id="KW-0934">Plastid</keyword>
<keyword id="KW-0793">Thylakoid</keyword>
<keyword id="KW-1278">Translocase</keyword>
<keyword id="KW-0813">Transport</keyword>
<reference key="1">
    <citation type="submission" date="2007-03" db="EMBL/GenBank/DDBJ databases">
        <title>Sequencing analysis of Barbarea verna chloroplast DNA.</title>
        <authorList>
            <person name="Hosouchi T."/>
            <person name="Tsuruoka H."/>
            <person name="Kotani H."/>
        </authorList>
    </citation>
    <scope>NUCLEOTIDE SEQUENCE [LARGE SCALE GENOMIC DNA]</scope>
</reference>
<proteinExistence type="inferred from homology"/>
<organism>
    <name type="scientific">Barbarea verna</name>
    <name type="common">Land cress</name>
    <name type="synonym">Erysimum vernum</name>
    <dbReference type="NCBI Taxonomy" id="50458"/>
    <lineage>
        <taxon>Eukaryota</taxon>
        <taxon>Viridiplantae</taxon>
        <taxon>Streptophyta</taxon>
        <taxon>Embryophyta</taxon>
        <taxon>Tracheophyta</taxon>
        <taxon>Spermatophyta</taxon>
        <taxon>Magnoliopsida</taxon>
        <taxon>eudicotyledons</taxon>
        <taxon>Gunneridae</taxon>
        <taxon>Pentapetalae</taxon>
        <taxon>rosids</taxon>
        <taxon>malvids</taxon>
        <taxon>Brassicales</taxon>
        <taxon>Brassicaceae</taxon>
        <taxon>Cardamineae</taxon>
        <taxon>Barbarea</taxon>
    </lineage>
</organism>
<geneLocation type="chloroplast"/>
<gene>
    <name evidence="2" type="primary">atpB</name>
</gene>
<dbReference type="EC" id="7.1.2.2" evidence="2"/>
<dbReference type="EMBL" id="AP009370">
    <property type="protein sequence ID" value="BAF50117.1"/>
    <property type="molecule type" value="Genomic_DNA"/>
</dbReference>
<dbReference type="RefSeq" id="YP_001123293.1">
    <property type="nucleotide sequence ID" value="NC_009269.1"/>
</dbReference>
<dbReference type="SMR" id="A4QKB2"/>
<dbReference type="GeneID" id="4961915"/>
<dbReference type="GO" id="GO:0009535">
    <property type="term" value="C:chloroplast thylakoid membrane"/>
    <property type="evidence" value="ECO:0007669"/>
    <property type="project" value="UniProtKB-SubCell"/>
</dbReference>
<dbReference type="GO" id="GO:0005739">
    <property type="term" value="C:mitochondrion"/>
    <property type="evidence" value="ECO:0007669"/>
    <property type="project" value="GOC"/>
</dbReference>
<dbReference type="GO" id="GO:0045259">
    <property type="term" value="C:proton-transporting ATP synthase complex"/>
    <property type="evidence" value="ECO:0007669"/>
    <property type="project" value="UniProtKB-KW"/>
</dbReference>
<dbReference type="GO" id="GO:0005524">
    <property type="term" value="F:ATP binding"/>
    <property type="evidence" value="ECO:0007669"/>
    <property type="project" value="UniProtKB-UniRule"/>
</dbReference>
<dbReference type="GO" id="GO:0016887">
    <property type="term" value="F:ATP hydrolysis activity"/>
    <property type="evidence" value="ECO:0007669"/>
    <property type="project" value="InterPro"/>
</dbReference>
<dbReference type="GO" id="GO:0046933">
    <property type="term" value="F:proton-transporting ATP synthase activity, rotational mechanism"/>
    <property type="evidence" value="ECO:0007669"/>
    <property type="project" value="UniProtKB-UniRule"/>
</dbReference>
<dbReference type="GO" id="GO:0042776">
    <property type="term" value="P:proton motive force-driven mitochondrial ATP synthesis"/>
    <property type="evidence" value="ECO:0007669"/>
    <property type="project" value="TreeGrafter"/>
</dbReference>
<dbReference type="CDD" id="cd18110">
    <property type="entry name" value="ATP-synt_F1_beta_C"/>
    <property type="match status" value="1"/>
</dbReference>
<dbReference type="CDD" id="cd18115">
    <property type="entry name" value="ATP-synt_F1_beta_N"/>
    <property type="match status" value="1"/>
</dbReference>
<dbReference type="CDD" id="cd01133">
    <property type="entry name" value="F1-ATPase_beta_CD"/>
    <property type="match status" value="1"/>
</dbReference>
<dbReference type="FunFam" id="1.10.1140.10:FF:000001">
    <property type="entry name" value="ATP synthase subunit beta"/>
    <property type="match status" value="1"/>
</dbReference>
<dbReference type="FunFam" id="3.40.50.300:FF:000026">
    <property type="entry name" value="ATP synthase subunit beta"/>
    <property type="match status" value="1"/>
</dbReference>
<dbReference type="FunFam" id="2.40.10.170:FF:000002">
    <property type="entry name" value="ATP synthase subunit beta, chloroplastic"/>
    <property type="match status" value="1"/>
</dbReference>
<dbReference type="Gene3D" id="2.40.10.170">
    <property type="match status" value="1"/>
</dbReference>
<dbReference type="Gene3D" id="1.10.1140.10">
    <property type="entry name" value="Bovine Mitochondrial F1-atpase, Atp Synthase Beta Chain, Chain D, domain 3"/>
    <property type="match status" value="1"/>
</dbReference>
<dbReference type="Gene3D" id="3.40.50.300">
    <property type="entry name" value="P-loop containing nucleotide triphosphate hydrolases"/>
    <property type="match status" value="1"/>
</dbReference>
<dbReference type="HAMAP" id="MF_01347">
    <property type="entry name" value="ATP_synth_beta_bact"/>
    <property type="match status" value="1"/>
</dbReference>
<dbReference type="InterPro" id="IPR003593">
    <property type="entry name" value="AAA+_ATPase"/>
</dbReference>
<dbReference type="InterPro" id="IPR055190">
    <property type="entry name" value="ATP-synt_VA_C"/>
</dbReference>
<dbReference type="InterPro" id="IPR005722">
    <property type="entry name" value="ATP_synth_F1_bsu"/>
</dbReference>
<dbReference type="InterPro" id="IPR020003">
    <property type="entry name" value="ATPase_a/bsu_AS"/>
</dbReference>
<dbReference type="InterPro" id="IPR050053">
    <property type="entry name" value="ATPase_alpha/beta_chains"/>
</dbReference>
<dbReference type="InterPro" id="IPR004100">
    <property type="entry name" value="ATPase_F1/V1/A1_a/bsu_N"/>
</dbReference>
<dbReference type="InterPro" id="IPR036121">
    <property type="entry name" value="ATPase_F1/V1/A1_a/bsu_N_sf"/>
</dbReference>
<dbReference type="InterPro" id="IPR000194">
    <property type="entry name" value="ATPase_F1/V1/A1_a/bsu_nucl-bd"/>
</dbReference>
<dbReference type="InterPro" id="IPR024034">
    <property type="entry name" value="ATPase_F1/V1_b/a_C"/>
</dbReference>
<dbReference type="InterPro" id="IPR027417">
    <property type="entry name" value="P-loop_NTPase"/>
</dbReference>
<dbReference type="NCBIfam" id="TIGR01039">
    <property type="entry name" value="atpD"/>
    <property type="match status" value="1"/>
</dbReference>
<dbReference type="PANTHER" id="PTHR15184">
    <property type="entry name" value="ATP SYNTHASE"/>
    <property type="match status" value="1"/>
</dbReference>
<dbReference type="PANTHER" id="PTHR15184:SF71">
    <property type="entry name" value="ATP SYNTHASE SUBUNIT BETA, MITOCHONDRIAL"/>
    <property type="match status" value="1"/>
</dbReference>
<dbReference type="Pfam" id="PF00006">
    <property type="entry name" value="ATP-synt_ab"/>
    <property type="match status" value="1"/>
</dbReference>
<dbReference type="Pfam" id="PF02874">
    <property type="entry name" value="ATP-synt_ab_N"/>
    <property type="match status" value="1"/>
</dbReference>
<dbReference type="Pfam" id="PF22919">
    <property type="entry name" value="ATP-synt_VA_C"/>
    <property type="match status" value="1"/>
</dbReference>
<dbReference type="SMART" id="SM00382">
    <property type="entry name" value="AAA"/>
    <property type="match status" value="1"/>
</dbReference>
<dbReference type="SUPFAM" id="SSF47917">
    <property type="entry name" value="C-terminal domain of alpha and beta subunits of F1 ATP synthase"/>
    <property type="match status" value="1"/>
</dbReference>
<dbReference type="SUPFAM" id="SSF50615">
    <property type="entry name" value="N-terminal domain of alpha and beta subunits of F1 ATP synthase"/>
    <property type="match status" value="1"/>
</dbReference>
<dbReference type="SUPFAM" id="SSF52540">
    <property type="entry name" value="P-loop containing nucleoside triphosphate hydrolases"/>
    <property type="match status" value="1"/>
</dbReference>
<dbReference type="PROSITE" id="PS00152">
    <property type="entry name" value="ATPASE_ALPHA_BETA"/>
    <property type="match status" value="1"/>
</dbReference>